<evidence type="ECO:0000250" key="1">
    <source>
        <dbReference type="UniProtKB" id="P36394"/>
    </source>
</evidence>
<evidence type="ECO:0000250" key="2">
    <source>
        <dbReference type="UniProtKB" id="Q05066"/>
    </source>
</evidence>
<evidence type="ECO:0000255" key="3">
    <source>
        <dbReference type="PROSITE-ProRule" id="PRU00267"/>
    </source>
</evidence>
<evidence type="ECO:0000305" key="4"/>
<feature type="chain" id="PRO_0000048708" description="Sex-determining region Y protein">
    <location>
        <begin position="1"/>
        <end position="208"/>
    </location>
</feature>
<feature type="DNA-binding region" description="HMG box" evidence="3">
    <location>
        <begin position="35"/>
        <end position="102"/>
    </location>
</feature>
<keyword id="KW-0007">Acetylation</keyword>
<keyword id="KW-0010">Activator</keyword>
<keyword id="KW-0112">Calmodulin-binding</keyword>
<keyword id="KW-0963">Cytoplasm</keyword>
<keyword id="KW-0221">Differentiation</keyword>
<keyword id="KW-0238">DNA-binding</keyword>
<keyword id="KW-0539">Nucleus</keyword>
<keyword id="KW-0678">Repressor</keyword>
<keyword id="KW-0726">Sexual differentiation</keyword>
<keyword id="KW-0804">Transcription</keyword>
<keyword id="KW-0805">Transcription regulation</keyword>
<protein>
    <recommendedName>
        <fullName>Sex-determining region Y protein</fullName>
    </recommendedName>
    <alternativeName>
        <fullName>Testis-determining factor</fullName>
    </alternativeName>
</protein>
<accession>P36395</accession>
<dbReference type="EMBL" id="S46279">
    <property type="protein sequence ID" value="AAB23669.1"/>
    <property type="molecule type" value="mRNA"/>
</dbReference>
<dbReference type="PIR" id="S29081">
    <property type="entry name" value="S29081"/>
</dbReference>
<dbReference type="SMR" id="P36395"/>
<dbReference type="GO" id="GO:0005737">
    <property type="term" value="C:cytoplasm"/>
    <property type="evidence" value="ECO:0007669"/>
    <property type="project" value="UniProtKB-SubCell"/>
</dbReference>
<dbReference type="GO" id="GO:0016607">
    <property type="term" value="C:nuclear speck"/>
    <property type="evidence" value="ECO:0007669"/>
    <property type="project" value="UniProtKB-SubCell"/>
</dbReference>
<dbReference type="GO" id="GO:0005634">
    <property type="term" value="C:nucleus"/>
    <property type="evidence" value="ECO:0000250"/>
    <property type="project" value="UniProtKB"/>
</dbReference>
<dbReference type="GO" id="GO:0005516">
    <property type="term" value="F:calmodulin binding"/>
    <property type="evidence" value="ECO:0007669"/>
    <property type="project" value="UniProtKB-KW"/>
</dbReference>
<dbReference type="GO" id="GO:0001228">
    <property type="term" value="F:DNA-binding transcription activator activity, RNA polymerase II-specific"/>
    <property type="evidence" value="ECO:0007669"/>
    <property type="project" value="TreeGrafter"/>
</dbReference>
<dbReference type="GO" id="GO:0000978">
    <property type="term" value="F:RNA polymerase II cis-regulatory region sequence-specific DNA binding"/>
    <property type="evidence" value="ECO:0007669"/>
    <property type="project" value="TreeGrafter"/>
</dbReference>
<dbReference type="GO" id="GO:0007420">
    <property type="term" value="P:brain development"/>
    <property type="evidence" value="ECO:0007669"/>
    <property type="project" value="TreeGrafter"/>
</dbReference>
<dbReference type="GO" id="GO:0000122">
    <property type="term" value="P:negative regulation of transcription by RNA polymerase II"/>
    <property type="evidence" value="ECO:0007669"/>
    <property type="project" value="TreeGrafter"/>
</dbReference>
<dbReference type="GO" id="GO:0030182">
    <property type="term" value="P:neuron differentiation"/>
    <property type="evidence" value="ECO:0007669"/>
    <property type="project" value="TreeGrafter"/>
</dbReference>
<dbReference type="GO" id="GO:0007548">
    <property type="term" value="P:sex differentiation"/>
    <property type="evidence" value="ECO:0007669"/>
    <property type="project" value="UniProtKB-KW"/>
</dbReference>
<dbReference type="CDD" id="cd22028">
    <property type="entry name" value="HMG-box_SoxA_SoxB_SoxG"/>
    <property type="match status" value="1"/>
</dbReference>
<dbReference type="FunFam" id="1.10.30.10:FF:000002">
    <property type="entry name" value="transcription factor Sox-2"/>
    <property type="match status" value="1"/>
</dbReference>
<dbReference type="Gene3D" id="1.10.30.10">
    <property type="entry name" value="High mobility group box domain"/>
    <property type="match status" value="1"/>
</dbReference>
<dbReference type="InterPro" id="IPR009071">
    <property type="entry name" value="HMG_box_dom"/>
</dbReference>
<dbReference type="InterPro" id="IPR036910">
    <property type="entry name" value="HMG_box_dom_sf"/>
</dbReference>
<dbReference type="InterPro" id="IPR050140">
    <property type="entry name" value="SRY-related_HMG-box_TF-like"/>
</dbReference>
<dbReference type="PANTHER" id="PTHR10270:SF324">
    <property type="entry name" value="SOX DOMAIN-CONTAINING PROTEIN DICHAETE-RELATED"/>
    <property type="match status" value="1"/>
</dbReference>
<dbReference type="PANTHER" id="PTHR10270">
    <property type="entry name" value="SOX TRANSCRIPTION FACTOR"/>
    <property type="match status" value="1"/>
</dbReference>
<dbReference type="Pfam" id="PF00505">
    <property type="entry name" value="HMG_box"/>
    <property type="match status" value="1"/>
</dbReference>
<dbReference type="SMART" id="SM00398">
    <property type="entry name" value="HMG"/>
    <property type="match status" value="1"/>
</dbReference>
<dbReference type="SUPFAM" id="SSF47095">
    <property type="entry name" value="HMG-box"/>
    <property type="match status" value="1"/>
</dbReference>
<dbReference type="PROSITE" id="PS50118">
    <property type="entry name" value="HMG_BOX_2"/>
    <property type="match status" value="1"/>
</dbReference>
<gene>
    <name type="primary">SRY</name>
    <name type="synonym">TDF</name>
</gene>
<comment type="function">
    <text evidence="1 2">Transcriptional regulator that controls a genetic switch in male development. It is necessary and sufficient for initiating male sex determination by directing the development of supporting cell precursors (pre-Sertoli cells) as Sertoli rather than granulosa cells. Involved in different aspects of gene regulation including promoter activation or repression. Binds to the DNA consensus sequence 5'-[AT]AACAA[AT]-3'. SRY HMG box recognizes DNA by partial intercalation in the minor groove and promotes DNA bending. Also involved in pre-mRNA splicing (By similarity). In male adult brain involved in the maintenance of motor functions of dopaminergic neurons (By similarity).</text>
</comment>
<comment type="subunit">
    <text evidence="2">Interacts with CALM, EP300, HDAC3, KPNB1, ZNF208 isoform KRAB-O, PARP1, SLC9A3R2 and WT1. The interaction with EP300 modulates its DNA-binding activity. The interaction with KPNB1 is sensitive to dissociation by Ran in the GTP-bound form. Interaction with PARP1 impaired its DNA-binding activity.</text>
</comment>
<comment type="subcellular location">
    <subcellularLocation>
        <location evidence="2">Nucleus speckle</location>
    </subcellularLocation>
    <subcellularLocation>
        <location evidence="2">Cytoplasm</location>
    </subcellularLocation>
    <subcellularLocation>
        <location evidence="2">Nucleus</location>
    </subcellularLocation>
</comment>
<comment type="PTM">
    <text evidence="2">Acetylation of Lys-110 contributes to its nuclear localization and enhances its interaction with KPNB1. Deacetylated by HDAC3.</text>
</comment>
<comment type="similarity">
    <text evidence="4">Belongs to the SRY family.</text>
</comment>
<comment type="online information" name="Protein Spotlight">
    <link uri="https://www.proteinspotlight.org/back_issues/080"/>
    <text>The tenuous nature of sex - Issue 80 of March 2007</text>
</comment>
<name>SRY_SMIMA</name>
<proteinExistence type="evidence at transcript level"/>
<reference key="1">
    <citation type="journal article" date="1992" name="Nature">
        <title>Evolution of sex determination and the Y chromosome: SRY-related sequences in marsupials.</title>
        <authorList>
            <person name="Foster J.W."/>
            <person name="Brennan F.E."/>
            <person name="Hampikian G.K."/>
            <person name="Goodfellow P.N."/>
            <person name="Sinclair A.H."/>
            <person name="Lovell-Badge R."/>
            <person name="Selwood L."/>
            <person name="Renfree M.B."/>
            <person name="Cooper D.W."/>
            <person name="Graves J.A."/>
        </authorList>
    </citation>
    <scope>NUCLEOTIDE SEQUENCE [MRNA]</scope>
</reference>
<organism>
    <name type="scientific">Sminthopsis macroura</name>
    <name type="common">Stripe-faced dunnart</name>
    <dbReference type="NCBI Taxonomy" id="9302"/>
    <lineage>
        <taxon>Eukaryota</taxon>
        <taxon>Metazoa</taxon>
        <taxon>Chordata</taxon>
        <taxon>Craniata</taxon>
        <taxon>Vertebrata</taxon>
        <taxon>Euteleostomi</taxon>
        <taxon>Mammalia</taxon>
        <taxon>Metatheria</taxon>
        <taxon>Dasyuromorphia</taxon>
        <taxon>Dasyuridae</taxon>
        <taxon>Sminthopsis</taxon>
    </lineage>
</organism>
<sequence length="208" mass="24537">MCSFLDVEVKDRFVEGDFGMSEMVKSNLANCSSRVKRPMNAFMVWSQTQRRKVALQNPKMHNSEISKQLGVTWKLLSDSEKRPFIDEAKRLRDKHKQVSDYKYQPRRKTKSFLKNVYNHKDHLTKATDQLIKTQHLKEDSTTIYENTMKCPEISSFYCAQESTYLDNWMNLPPEQENTEFWQGLFTNETETCRSLPHGQMDCNECRSI</sequence>